<dbReference type="EC" id="2.8.4.3" evidence="1"/>
<dbReference type="EMBL" id="DS999641">
    <property type="protein sequence ID" value="EFE66718.2"/>
    <property type="molecule type" value="Genomic_DNA"/>
</dbReference>
<dbReference type="RefSeq" id="WP_004982616.1">
    <property type="nucleotide sequence ID" value="NZ_DS999641.1"/>
</dbReference>
<dbReference type="SMR" id="D5ZT17"/>
<dbReference type="eggNOG" id="COG0621">
    <property type="taxonomic scope" value="Bacteria"/>
</dbReference>
<dbReference type="Proteomes" id="UP000003824">
    <property type="component" value="Unassembled WGS sequence"/>
</dbReference>
<dbReference type="GO" id="GO:0005829">
    <property type="term" value="C:cytosol"/>
    <property type="evidence" value="ECO:0007669"/>
    <property type="project" value="TreeGrafter"/>
</dbReference>
<dbReference type="GO" id="GO:0051539">
    <property type="term" value="F:4 iron, 4 sulfur cluster binding"/>
    <property type="evidence" value="ECO:0007669"/>
    <property type="project" value="UniProtKB-UniRule"/>
</dbReference>
<dbReference type="GO" id="GO:0046872">
    <property type="term" value="F:metal ion binding"/>
    <property type="evidence" value="ECO:0007669"/>
    <property type="project" value="UniProtKB-KW"/>
</dbReference>
<dbReference type="GO" id="GO:0035597">
    <property type="term" value="F:N6-isopentenyladenosine methylthiotransferase activity"/>
    <property type="evidence" value="ECO:0007669"/>
    <property type="project" value="TreeGrafter"/>
</dbReference>
<dbReference type="CDD" id="cd01335">
    <property type="entry name" value="Radical_SAM"/>
    <property type="match status" value="1"/>
</dbReference>
<dbReference type="FunFam" id="3.40.50.12160:FF:000008">
    <property type="entry name" value="tRNA-2-methylthio-N(6)-dimethylallyladenosine synthase"/>
    <property type="match status" value="1"/>
</dbReference>
<dbReference type="FunFam" id="3.80.30.20:FF:000001">
    <property type="entry name" value="tRNA-2-methylthio-N(6)-dimethylallyladenosine synthase 2"/>
    <property type="match status" value="1"/>
</dbReference>
<dbReference type="Gene3D" id="3.40.50.12160">
    <property type="entry name" value="Methylthiotransferase, N-terminal domain"/>
    <property type="match status" value="1"/>
</dbReference>
<dbReference type="Gene3D" id="3.80.30.20">
    <property type="entry name" value="tm_1862 like domain"/>
    <property type="match status" value="1"/>
</dbReference>
<dbReference type="HAMAP" id="MF_01864">
    <property type="entry name" value="tRNA_metthiotr_MiaB"/>
    <property type="match status" value="1"/>
</dbReference>
<dbReference type="InterPro" id="IPR006638">
    <property type="entry name" value="Elp3/MiaA/NifB-like_rSAM"/>
</dbReference>
<dbReference type="InterPro" id="IPR005839">
    <property type="entry name" value="Methylthiotransferase"/>
</dbReference>
<dbReference type="InterPro" id="IPR020612">
    <property type="entry name" value="Methylthiotransferase_CS"/>
</dbReference>
<dbReference type="InterPro" id="IPR013848">
    <property type="entry name" value="Methylthiotransferase_N"/>
</dbReference>
<dbReference type="InterPro" id="IPR038135">
    <property type="entry name" value="Methylthiotransferase_N_sf"/>
</dbReference>
<dbReference type="InterPro" id="IPR006463">
    <property type="entry name" value="MiaB_methiolase"/>
</dbReference>
<dbReference type="InterPro" id="IPR007197">
    <property type="entry name" value="rSAM"/>
</dbReference>
<dbReference type="InterPro" id="IPR023404">
    <property type="entry name" value="rSAM_horseshoe"/>
</dbReference>
<dbReference type="InterPro" id="IPR002792">
    <property type="entry name" value="TRAM_dom"/>
</dbReference>
<dbReference type="NCBIfam" id="TIGR01574">
    <property type="entry name" value="miaB-methiolase"/>
    <property type="match status" value="1"/>
</dbReference>
<dbReference type="NCBIfam" id="TIGR00089">
    <property type="entry name" value="MiaB/RimO family radical SAM methylthiotransferase"/>
    <property type="match status" value="1"/>
</dbReference>
<dbReference type="PANTHER" id="PTHR43020">
    <property type="entry name" value="CDK5 REGULATORY SUBUNIT-ASSOCIATED PROTEIN 1"/>
    <property type="match status" value="1"/>
</dbReference>
<dbReference type="PANTHER" id="PTHR43020:SF2">
    <property type="entry name" value="MITOCHONDRIAL TRNA METHYLTHIOTRANSFERASE CDK5RAP1"/>
    <property type="match status" value="1"/>
</dbReference>
<dbReference type="Pfam" id="PF04055">
    <property type="entry name" value="Radical_SAM"/>
    <property type="match status" value="1"/>
</dbReference>
<dbReference type="Pfam" id="PF00919">
    <property type="entry name" value="UPF0004"/>
    <property type="match status" value="1"/>
</dbReference>
<dbReference type="SFLD" id="SFLDF00273">
    <property type="entry name" value="(dimethylallyl)adenosine_tRNA"/>
    <property type="match status" value="1"/>
</dbReference>
<dbReference type="SFLD" id="SFLDG01082">
    <property type="entry name" value="B12-binding_domain_containing"/>
    <property type="match status" value="1"/>
</dbReference>
<dbReference type="SFLD" id="SFLDG01061">
    <property type="entry name" value="methylthiotransferase"/>
    <property type="match status" value="1"/>
</dbReference>
<dbReference type="SMART" id="SM00729">
    <property type="entry name" value="Elp3"/>
    <property type="match status" value="1"/>
</dbReference>
<dbReference type="SUPFAM" id="SSF102114">
    <property type="entry name" value="Radical SAM enzymes"/>
    <property type="match status" value="1"/>
</dbReference>
<dbReference type="PROSITE" id="PS51449">
    <property type="entry name" value="MTTASE_N"/>
    <property type="match status" value="1"/>
</dbReference>
<dbReference type="PROSITE" id="PS01278">
    <property type="entry name" value="MTTASE_RADICAL"/>
    <property type="match status" value="1"/>
</dbReference>
<dbReference type="PROSITE" id="PS51918">
    <property type="entry name" value="RADICAL_SAM"/>
    <property type="match status" value="1"/>
</dbReference>
<dbReference type="PROSITE" id="PS50926">
    <property type="entry name" value="TRAM"/>
    <property type="match status" value="1"/>
</dbReference>
<keyword id="KW-0004">4Fe-4S</keyword>
<keyword id="KW-0963">Cytoplasm</keyword>
<keyword id="KW-0408">Iron</keyword>
<keyword id="KW-0411">Iron-sulfur</keyword>
<keyword id="KW-0479">Metal-binding</keyword>
<keyword id="KW-0949">S-adenosyl-L-methionine</keyword>
<keyword id="KW-0808">Transferase</keyword>
<keyword id="KW-0819">tRNA processing</keyword>
<feature type="chain" id="PRO_0000446296" description="tRNA-2-methylthio-N(6)-dimethylallyladenosine synthase">
    <location>
        <begin position="1"/>
        <end position="505"/>
    </location>
</feature>
<feature type="domain" description="MTTase N-terminal" evidence="1">
    <location>
        <begin position="14"/>
        <end position="132"/>
    </location>
</feature>
<feature type="domain" description="Radical SAM core" evidence="2">
    <location>
        <begin position="155"/>
        <end position="386"/>
    </location>
</feature>
<feature type="domain" description="TRAM" evidence="1">
    <location>
        <begin position="388"/>
        <end position="456"/>
    </location>
</feature>
<feature type="binding site" evidence="1">
    <location>
        <position position="23"/>
    </location>
    <ligand>
        <name>[4Fe-4S] cluster</name>
        <dbReference type="ChEBI" id="CHEBI:49883"/>
        <label>1</label>
    </ligand>
</feature>
<feature type="binding site" evidence="1">
    <location>
        <position position="61"/>
    </location>
    <ligand>
        <name>[4Fe-4S] cluster</name>
        <dbReference type="ChEBI" id="CHEBI:49883"/>
        <label>1</label>
    </ligand>
</feature>
<feature type="binding site" evidence="1">
    <location>
        <position position="95"/>
    </location>
    <ligand>
        <name>[4Fe-4S] cluster</name>
        <dbReference type="ChEBI" id="CHEBI:49883"/>
        <label>1</label>
    </ligand>
</feature>
<feature type="binding site" evidence="1">
    <location>
        <position position="169"/>
    </location>
    <ligand>
        <name>[4Fe-4S] cluster</name>
        <dbReference type="ChEBI" id="CHEBI:49883"/>
        <label>2</label>
        <note>4Fe-4S-S-AdoMet</note>
    </ligand>
</feature>
<feature type="binding site" evidence="1">
    <location>
        <position position="173"/>
    </location>
    <ligand>
        <name>[4Fe-4S] cluster</name>
        <dbReference type="ChEBI" id="CHEBI:49883"/>
        <label>2</label>
        <note>4Fe-4S-S-AdoMet</note>
    </ligand>
</feature>
<feature type="binding site" evidence="1">
    <location>
        <position position="176"/>
    </location>
    <ligand>
        <name>[4Fe-4S] cluster</name>
        <dbReference type="ChEBI" id="CHEBI:49883"/>
        <label>2</label>
        <note>4Fe-4S-S-AdoMet</note>
    </ligand>
</feature>
<name>MIAB_STRV1</name>
<reference key="1">
    <citation type="submission" date="2008-12" db="EMBL/GenBank/DDBJ databases">
        <title>Annotation of Streptomyces ghanaensis ATCC 14672.</title>
        <authorList>
            <consortium name="The Broad Institute Genome Sequencing Platform"/>
            <consortium name="Broad Institute Microbial Sequencing Center"/>
            <person name="Fischbach M."/>
            <person name="Ward D."/>
            <person name="Young S."/>
            <person name="Kodira C.D."/>
            <person name="Zeng Q."/>
            <person name="Koehrsen M."/>
            <person name="Godfrey P."/>
            <person name="Alvarado L."/>
            <person name="Berlin A.M."/>
            <person name="Borenstein D."/>
            <person name="Chen Z."/>
            <person name="Engels R."/>
            <person name="Freedman E."/>
            <person name="Gellesch M."/>
            <person name="Goldberg J."/>
            <person name="Griggs A."/>
            <person name="Gujja S."/>
            <person name="Heiman D.I."/>
            <person name="Hepburn T.A."/>
            <person name="Howarth C."/>
            <person name="Jen D."/>
            <person name="Larson L."/>
            <person name="Lewis B."/>
            <person name="Mehta T."/>
            <person name="Park D."/>
            <person name="Pearson M."/>
            <person name="Roberts A."/>
            <person name="Saif S."/>
            <person name="Shea T.D."/>
            <person name="Shenoy N."/>
            <person name="Sisk P."/>
            <person name="Stolte C."/>
            <person name="Sykes S.N."/>
            <person name="Walk T."/>
            <person name="White J."/>
            <person name="Yandava C."/>
            <person name="Straight P."/>
            <person name="Clardy J."/>
            <person name="Hung D."/>
            <person name="Kolter R."/>
            <person name="Mekalanos J."/>
            <person name="Walker S."/>
            <person name="Walsh C.T."/>
            <person name="Wieland B.L.C."/>
            <person name="Ilzarbe M."/>
            <person name="Galagan J."/>
            <person name="Nusbaum C."/>
            <person name="Birren B."/>
        </authorList>
    </citation>
    <scope>NUCLEOTIDE SEQUENCE [LARGE SCALE GENOMIC DNA]</scope>
    <source>
        <strain>ATCC 14672 / DSM 40746 / JCM 4963 / KCTC 9882 / NRRL B-12104 / FH 1290</strain>
    </source>
</reference>
<reference key="2">
    <citation type="journal article" date="2019" name="Microbiology">
        <title>Gene ssfg_01967 (miaB) for tRNA modification influences morphogenesis and moenomycin biosynthesis in Streptomyces ghanaensis ATCC14672.</title>
        <authorList>
            <person name="Sehin Y."/>
            <person name="Koshla O."/>
            <person name="Dacyuk Y."/>
            <person name="Zhao R."/>
            <person name="Ross R."/>
            <person name="Myronovskyi M."/>
            <person name="Limbach P.A."/>
            <person name="Luzhetskyy A."/>
            <person name="Walker S."/>
            <person name="Fedorenko V."/>
            <person name="Ostash B."/>
        </authorList>
    </citation>
    <scope>DISRUPTION PHENOTYPE</scope>
    <source>
        <strain>ATCC 14672 / DSM 40746 / JCM 4963 / KCTC 9882 / NRRL B-12104 / FH 1290</strain>
    </source>
</reference>
<gene>
    <name evidence="1 4" type="primary">miaB</name>
    <name evidence="5" type="ORF">SSFG_01967</name>
</gene>
<protein>
    <recommendedName>
        <fullName evidence="1">tRNA-2-methylthio-N(6)-dimethylallyladenosine synthase</fullName>
        <ecNumber evidence="1">2.8.4.3</ecNumber>
    </recommendedName>
    <alternativeName>
        <fullName evidence="1 4">(Dimethylallyl)adenosine tRNA methylthiotransferase MiaB</fullName>
    </alternativeName>
    <alternativeName>
        <fullName evidence="1">tRNA-i(6)A37 methylthiotransferase</fullName>
    </alternativeName>
</protein>
<organism>
    <name type="scientific">Streptomyces viridosporus (strain ATCC 14672 / DSM 40746 / JCM 4963 / KCTC 9882 / NRRL B-12104 / FH 1290)</name>
    <name type="common">Streptomyces ghanaensis</name>
    <dbReference type="NCBI Taxonomy" id="566461"/>
    <lineage>
        <taxon>Bacteria</taxon>
        <taxon>Bacillati</taxon>
        <taxon>Actinomycetota</taxon>
        <taxon>Actinomycetes</taxon>
        <taxon>Kitasatosporales</taxon>
        <taxon>Streptomycetaceae</taxon>
        <taxon>Streptomyces</taxon>
    </lineage>
</organism>
<comment type="function">
    <text evidence="1">Catalyzes the methylthiolation of N6-(dimethylallyl)adenosine (i(6)A), leading to the formation of 2-methylthio-N6-(dimethylallyl)adenosine (ms(2)i(6)A) at position 37 in tRNAs that read codons beginning with uridine.</text>
</comment>
<comment type="catalytic activity">
    <reaction evidence="1">
        <text>N(6)-dimethylallyladenosine(37) in tRNA + (sulfur carrier)-SH + AH2 + 2 S-adenosyl-L-methionine = 2-methylsulfanyl-N(6)-dimethylallyladenosine(37) in tRNA + (sulfur carrier)-H + 5'-deoxyadenosine + L-methionine + A + S-adenosyl-L-homocysteine + 2 H(+)</text>
        <dbReference type="Rhea" id="RHEA:37067"/>
        <dbReference type="Rhea" id="RHEA-COMP:10375"/>
        <dbReference type="Rhea" id="RHEA-COMP:10376"/>
        <dbReference type="Rhea" id="RHEA-COMP:14737"/>
        <dbReference type="Rhea" id="RHEA-COMP:14739"/>
        <dbReference type="ChEBI" id="CHEBI:13193"/>
        <dbReference type="ChEBI" id="CHEBI:15378"/>
        <dbReference type="ChEBI" id="CHEBI:17319"/>
        <dbReference type="ChEBI" id="CHEBI:17499"/>
        <dbReference type="ChEBI" id="CHEBI:29917"/>
        <dbReference type="ChEBI" id="CHEBI:57844"/>
        <dbReference type="ChEBI" id="CHEBI:57856"/>
        <dbReference type="ChEBI" id="CHEBI:59789"/>
        <dbReference type="ChEBI" id="CHEBI:64428"/>
        <dbReference type="ChEBI" id="CHEBI:74415"/>
        <dbReference type="ChEBI" id="CHEBI:74417"/>
        <dbReference type="EC" id="2.8.4.3"/>
    </reaction>
</comment>
<comment type="cofactor">
    <cofactor evidence="1">
        <name>[4Fe-4S] cluster</name>
        <dbReference type="ChEBI" id="CHEBI:49883"/>
    </cofactor>
    <text evidence="1">Binds 2 [4Fe-4S] clusters. One cluster is coordinated with 3 cysteines and an exchangeable S-adenosyl-L-methionine.</text>
</comment>
<comment type="subunit">
    <text evidence="1">Monomer.</text>
</comment>
<comment type="subcellular location">
    <subcellularLocation>
        <location evidence="1">Cytoplasm</location>
    </subcellularLocation>
</comment>
<comment type="disruption phenotype">
    <text evidence="3">Insertion mutant accumulates lower amounts of moenomycin and is impaired in morphogenesis as compared to the parental strain. Mutant shows reduced level of thiomethylation at position 37 in the anticodon of tRNA.</text>
</comment>
<comment type="similarity">
    <text evidence="1">Belongs to the methylthiotransferase family. MiaB subfamily.</text>
</comment>
<sequence length="505" mass="55465">MSSIDRSQSVGGTRTYEVRTYGCQMNVHDSERLAGLLEDAGYVRAPEGSDGDADVVVFNTCAVRENADNKLYGNLGHLAPKKARRPGMQIAVGGCLAQKDRDTIVKRAPWVDVVFGTHNIGKLPVLLERARVQEEAQVEIAESLEAFPSTLPTRRESAYAAWVSISVGCNNTCTFCIVPALRGKEKDRRPGDILAEIEALVAEGVSEITLLGQNVNAYGSDIGDREAFSKLLRACGRIDGLERVRFTSPHPRDFTDDVIAAMAETPNVMPQLHMPLQSGSDAVLKAMRRSYRQERYLGIIEKVRAAIPHAAISTDIIVGFPGETEEDFEQTLHVVREARFAQAFTFQYSKRPGTPAAEMDGQIPKKVVQERYERLVALQEEISWEENKKQVGRTLELMVAEGEGRKDDTTHRLSGRAPDNRLVHFTKPEQEVRPGDVVTVEITYAAPHHLLAEGPVRDVRRTRAGDAWEKRNAAEAAKPAGVMLGLPKVGVPEPLPAVTGGCAVD</sequence>
<evidence type="ECO:0000255" key="1">
    <source>
        <dbReference type="HAMAP-Rule" id="MF_01864"/>
    </source>
</evidence>
<evidence type="ECO:0000255" key="2">
    <source>
        <dbReference type="PROSITE-ProRule" id="PRU01266"/>
    </source>
</evidence>
<evidence type="ECO:0000269" key="3">
    <source>
    </source>
</evidence>
<evidence type="ECO:0000303" key="4">
    <source>
    </source>
</evidence>
<evidence type="ECO:0000312" key="5">
    <source>
        <dbReference type="EMBL" id="EFE66718.2"/>
    </source>
</evidence>
<proteinExistence type="inferred from homology"/>
<accession>D5ZT17</accession>